<sequence>MAEFLFEIGLEEIPARMIAAAESELARRVAELLQREDLLAEGHAVTRYSTPRRLAVLVTGVKAAQADREEQLTGPAWSIAFKDGQPTPAAQAFAKKAGVEVAALQKVTTPKGEYVGASSVRKGRAANEILLEALPKEIAAIYWPKNMYWRAGKPERFVRPVQWMVALLGEQVIPVEFAGVTAANVTYGHRILHGDAPVAIPAPMEYAATLEAAKVQADVEARRHRIRKALDHVTRTVPGARWREDEALVDAVTHLTEWPSVLLGSFETEFLALPEEVLVTVMRDHQKYFAVEDAAGKLAPHFLTALNTEPSDQAAAIIRHGNERVLRARFNDARFFWTVDQKISLANRLEMLQSVTFHKELGSYHQKTHTTREIAVKLSAQVRHAGTSVDEAALLRAVELAKTDLTTELVKEFTELQGIVGGLYARAQGEGEAVAQAIYWQYSPASMDDPIPPTLEGQLLGLADRIGTIVEMFAIGLEPTGSKDPFALRRAANAVVKILAEGKLPVTLDRLLNAAEESSKVENAAASREKVMAFLKERLEFYMREVLGYRYDVVNAVLAAGAHDVVDTIARAEALSAVRGSEDFAAIAAAFKRSKNILRQAAEKAGVAEDSLSADVDAALLPEPAEKQLHEAAAKLAPVVEELRAKNDYRAALEQIATLRPQVDLFFDKVMVMVEDDLLRHNRLALIQYVLRSFSSIADFSEIVAS</sequence>
<evidence type="ECO:0000255" key="1">
    <source>
        <dbReference type="HAMAP-Rule" id="MF_00255"/>
    </source>
</evidence>
<organism>
    <name type="scientific">Acidobacterium capsulatum (strain ATCC 51196 / DSM 11244 / BCRC 80197 / JCM 7670 / NBRC 15755 / NCIMB 13165 / 161)</name>
    <dbReference type="NCBI Taxonomy" id="240015"/>
    <lineage>
        <taxon>Bacteria</taxon>
        <taxon>Pseudomonadati</taxon>
        <taxon>Acidobacteriota</taxon>
        <taxon>Terriglobia</taxon>
        <taxon>Terriglobales</taxon>
        <taxon>Acidobacteriaceae</taxon>
        <taxon>Acidobacterium</taxon>
    </lineage>
</organism>
<comment type="catalytic activity">
    <reaction evidence="1">
        <text>tRNA(Gly) + glycine + ATP = glycyl-tRNA(Gly) + AMP + diphosphate</text>
        <dbReference type="Rhea" id="RHEA:16013"/>
        <dbReference type="Rhea" id="RHEA-COMP:9664"/>
        <dbReference type="Rhea" id="RHEA-COMP:9683"/>
        <dbReference type="ChEBI" id="CHEBI:30616"/>
        <dbReference type="ChEBI" id="CHEBI:33019"/>
        <dbReference type="ChEBI" id="CHEBI:57305"/>
        <dbReference type="ChEBI" id="CHEBI:78442"/>
        <dbReference type="ChEBI" id="CHEBI:78522"/>
        <dbReference type="ChEBI" id="CHEBI:456215"/>
        <dbReference type="EC" id="6.1.1.14"/>
    </reaction>
</comment>
<comment type="subunit">
    <text evidence="1">Tetramer of two alpha and two beta subunits.</text>
</comment>
<comment type="subcellular location">
    <subcellularLocation>
        <location evidence="1">Cytoplasm</location>
    </subcellularLocation>
</comment>
<comment type="similarity">
    <text evidence="1">Belongs to the class-II aminoacyl-tRNA synthetase family.</text>
</comment>
<proteinExistence type="inferred from homology"/>
<name>SYGB_ACIC5</name>
<keyword id="KW-0030">Aminoacyl-tRNA synthetase</keyword>
<keyword id="KW-0067">ATP-binding</keyword>
<keyword id="KW-0963">Cytoplasm</keyword>
<keyword id="KW-0436">Ligase</keyword>
<keyword id="KW-0547">Nucleotide-binding</keyword>
<keyword id="KW-0648">Protein biosynthesis</keyword>
<keyword id="KW-1185">Reference proteome</keyword>
<accession>C1F1J0</accession>
<gene>
    <name evidence="1" type="primary">glyS</name>
    <name type="ordered locus">ACP_0591</name>
</gene>
<feature type="chain" id="PRO_1000197163" description="Glycine--tRNA ligase beta subunit">
    <location>
        <begin position="1"/>
        <end position="706"/>
    </location>
</feature>
<protein>
    <recommendedName>
        <fullName evidence="1">Glycine--tRNA ligase beta subunit</fullName>
        <ecNumber evidence="1">6.1.1.14</ecNumber>
    </recommendedName>
    <alternativeName>
        <fullName evidence="1">Glycyl-tRNA synthetase beta subunit</fullName>
        <shortName evidence="1">GlyRS</shortName>
    </alternativeName>
</protein>
<reference key="1">
    <citation type="journal article" date="2009" name="Appl. Environ. Microbiol.">
        <title>Three genomes from the phylum Acidobacteria provide insight into the lifestyles of these microorganisms in soils.</title>
        <authorList>
            <person name="Ward N.L."/>
            <person name="Challacombe J.F."/>
            <person name="Janssen P.H."/>
            <person name="Henrissat B."/>
            <person name="Coutinho P.M."/>
            <person name="Wu M."/>
            <person name="Xie G."/>
            <person name="Haft D.H."/>
            <person name="Sait M."/>
            <person name="Badger J."/>
            <person name="Barabote R.D."/>
            <person name="Bradley B."/>
            <person name="Brettin T.S."/>
            <person name="Brinkac L.M."/>
            <person name="Bruce D."/>
            <person name="Creasy T."/>
            <person name="Daugherty S.C."/>
            <person name="Davidsen T.M."/>
            <person name="DeBoy R.T."/>
            <person name="Detter J.C."/>
            <person name="Dodson R.J."/>
            <person name="Durkin A.S."/>
            <person name="Ganapathy A."/>
            <person name="Gwinn-Giglio M."/>
            <person name="Han C.S."/>
            <person name="Khouri H."/>
            <person name="Kiss H."/>
            <person name="Kothari S.P."/>
            <person name="Madupu R."/>
            <person name="Nelson K.E."/>
            <person name="Nelson W.C."/>
            <person name="Paulsen I."/>
            <person name="Penn K."/>
            <person name="Ren Q."/>
            <person name="Rosovitz M.J."/>
            <person name="Selengut J.D."/>
            <person name="Shrivastava S."/>
            <person name="Sullivan S.A."/>
            <person name="Tapia R."/>
            <person name="Thompson L.S."/>
            <person name="Watkins K.L."/>
            <person name="Yang Q."/>
            <person name="Yu C."/>
            <person name="Zafar N."/>
            <person name="Zhou L."/>
            <person name="Kuske C.R."/>
        </authorList>
    </citation>
    <scope>NUCLEOTIDE SEQUENCE [LARGE SCALE GENOMIC DNA]</scope>
    <source>
        <strain>ATCC 51196 / DSM 11244 / BCRC 80197 / JCM 7670 / NBRC 15755 / NCIMB 13165 / 161</strain>
    </source>
</reference>
<dbReference type="EC" id="6.1.1.14" evidence="1"/>
<dbReference type="EMBL" id="CP001472">
    <property type="protein sequence ID" value="ACO32145.1"/>
    <property type="molecule type" value="Genomic_DNA"/>
</dbReference>
<dbReference type="RefSeq" id="WP_015895776.1">
    <property type="nucleotide sequence ID" value="NC_012483.1"/>
</dbReference>
<dbReference type="SMR" id="C1F1J0"/>
<dbReference type="FunCoup" id="C1F1J0">
    <property type="interactions" value="495"/>
</dbReference>
<dbReference type="STRING" id="240015.ACP_0591"/>
<dbReference type="KEGG" id="aca:ACP_0591"/>
<dbReference type="eggNOG" id="COG0751">
    <property type="taxonomic scope" value="Bacteria"/>
</dbReference>
<dbReference type="HOGENOM" id="CLU_007220_2_2_0"/>
<dbReference type="InParanoid" id="C1F1J0"/>
<dbReference type="OrthoDB" id="9775440at2"/>
<dbReference type="Proteomes" id="UP000002207">
    <property type="component" value="Chromosome"/>
</dbReference>
<dbReference type="GO" id="GO:0005829">
    <property type="term" value="C:cytosol"/>
    <property type="evidence" value="ECO:0007669"/>
    <property type="project" value="TreeGrafter"/>
</dbReference>
<dbReference type="GO" id="GO:0004814">
    <property type="term" value="F:arginine-tRNA ligase activity"/>
    <property type="evidence" value="ECO:0007669"/>
    <property type="project" value="InterPro"/>
</dbReference>
<dbReference type="GO" id="GO:0005524">
    <property type="term" value="F:ATP binding"/>
    <property type="evidence" value="ECO:0007669"/>
    <property type="project" value="UniProtKB-UniRule"/>
</dbReference>
<dbReference type="GO" id="GO:0004820">
    <property type="term" value="F:glycine-tRNA ligase activity"/>
    <property type="evidence" value="ECO:0007669"/>
    <property type="project" value="UniProtKB-UniRule"/>
</dbReference>
<dbReference type="GO" id="GO:0006420">
    <property type="term" value="P:arginyl-tRNA aminoacylation"/>
    <property type="evidence" value="ECO:0007669"/>
    <property type="project" value="InterPro"/>
</dbReference>
<dbReference type="GO" id="GO:0006426">
    <property type="term" value="P:glycyl-tRNA aminoacylation"/>
    <property type="evidence" value="ECO:0007669"/>
    <property type="project" value="UniProtKB-UniRule"/>
</dbReference>
<dbReference type="Gene3D" id="1.10.730.10">
    <property type="entry name" value="Isoleucyl-tRNA Synthetase, Domain 1"/>
    <property type="match status" value="1"/>
</dbReference>
<dbReference type="HAMAP" id="MF_00255">
    <property type="entry name" value="Gly_tRNA_synth_beta"/>
    <property type="match status" value="1"/>
</dbReference>
<dbReference type="InterPro" id="IPR008909">
    <property type="entry name" value="DALR_anticod-bd"/>
</dbReference>
<dbReference type="InterPro" id="IPR015944">
    <property type="entry name" value="Gly-tRNA-synth_bsu"/>
</dbReference>
<dbReference type="InterPro" id="IPR006194">
    <property type="entry name" value="Gly-tRNA-synth_heterodimer"/>
</dbReference>
<dbReference type="NCBIfam" id="TIGR00211">
    <property type="entry name" value="glyS"/>
    <property type="match status" value="1"/>
</dbReference>
<dbReference type="PANTHER" id="PTHR30075:SF2">
    <property type="entry name" value="GLYCINE--TRNA LIGASE, CHLOROPLASTIC_MITOCHONDRIAL 2"/>
    <property type="match status" value="1"/>
</dbReference>
<dbReference type="PANTHER" id="PTHR30075">
    <property type="entry name" value="GLYCYL-TRNA SYNTHETASE"/>
    <property type="match status" value="1"/>
</dbReference>
<dbReference type="Pfam" id="PF05746">
    <property type="entry name" value="DALR_1"/>
    <property type="match status" value="1"/>
</dbReference>
<dbReference type="Pfam" id="PF02092">
    <property type="entry name" value="tRNA_synt_2f"/>
    <property type="match status" value="1"/>
</dbReference>
<dbReference type="PRINTS" id="PR01045">
    <property type="entry name" value="TRNASYNTHGB"/>
</dbReference>
<dbReference type="SMART" id="SM00836">
    <property type="entry name" value="DALR_1"/>
    <property type="match status" value="1"/>
</dbReference>
<dbReference type="SUPFAM" id="SSF109604">
    <property type="entry name" value="HD-domain/PDEase-like"/>
    <property type="match status" value="1"/>
</dbReference>
<dbReference type="PROSITE" id="PS50861">
    <property type="entry name" value="AA_TRNA_LIGASE_II_GLYAB"/>
    <property type="match status" value="1"/>
</dbReference>